<feature type="chain" id="PRO_0000118535" description="NADH-quinone oxidoreductase subunit K">
    <location>
        <begin position="1"/>
        <end position="110"/>
    </location>
</feature>
<feature type="transmembrane region" description="Helical" evidence="1">
    <location>
        <begin position="13"/>
        <end position="33"/>
    </location>
</feature>
<feature type="transmembrane region" description="Helical" evidence="1">
    <location>
        <begin position="41"/>
        <end position="61"/>
    </location>
</feature>
<feature type="transmembrane region" description="Helical" evidence="1">
    <location>
        <begin position="73"/>
        <end position="93"/>
    </location>
</feature>
<proteinExistence type="inferred from homology"/>
<name>NUOK_RICPR</name>
<evidence type="ECO:0000255" key="1">
    <source>
        <dbReference type="HAMAP-Rule" id="MF_01456"/>
    </source>
</evidence>
<organism>
    <name type="scientific">Rickettsia prowazekii (strain Madrid E)</name>
    <dbReference type="NCBI Taxonomy" id="272947"/>
    <lineage>
        <taxon>Bacteria</taxon>
        <taxon>Pseudomonadati</taxon>
        <taxon>Pseudomonadota</taxon>
        <taxon>Alphaproteobacteria</taxon>
        <taxon>Rickettsiales</taxon>
        <taxon>Rickettsiaceae</taxon>
        <taxon>Rickettsieae</taxon>
        <taxon>Rickettsia</taxon>
        <taxon>typhus group</taxon>
    </lineage>
</organism>
<protein>
    <recommendedName>
        <fullName evidence="1">NADH-quinone oxidoreductase subunit K</fullName>
        <ecNumber evidence="1">7.1.1.-</ecNumber>
    </recommendedName>
    <alternativeName>
        <fullName evidence="1">NADH dehydrogenase I subunit K</fullName>
    </alternativeName>
    <alternativeName>
        <fullName evidence="1">NDH-1 subunit K</fullName>
    </alternativeName>
</protein>
<dbReference type="EC" id="7.1.1.-" evidence="1"/>
<dbReference type="EMBL" id="AJ235273">
    <property type="protein sequence ID" value="CAA15217.1"/>
    <property type="molecule type" value="Genomic_DNA"/>
</dbReference>
<dbReference type="PIR" id="A71640">
    <property type="entry name" value="A71640"/>
</dbReference>
<dbReference type="RefSeq" id="NP_221141.2">
    <property type="nucleotide sequence ID" value="NC_000963.1"/>
</dbReference>
<dbReference type="SMR" id="Q9ZCG2"/>
<dbReference type="STRING" id="272947.gene:17555860"/>
<dbReference type="EnsemblBacteria" id="CAA15217">
    <property type="protein sequence ID" value="CAA15217"/>
    <property type="gene ID" value="CAA15217"/>
</dbReference>
<dbReference type="KEGG" id="rpr:RP791"/>
<dbReference type="PATRIC" id="fig|272947.5.peg.827"/>
<dbReference type="eggNOG" id="COG0713">
    <property type="taxonomic scope" value="Bacteria"/>
</dbReference>
<dbReference type="HOGENOM" id="CLU_144724_2_0_5"/>
<dbReference type="OrthoDB" id="9811124at2"/>
<dbReference type="Proteomes" id="UP000002480">
    <property type="component" value="Chromosome"/>
</dbReference>
<dbReference type="GO" id="GO:0030964">
    <property type="term" value="C:NADH dehydrogenase complex"/>
    <property type="evidence" value="ECO:0007669"/>
    <property type="project" value="TreeGrafter"/>
</dbReference>
<dbReference type="GO" id="GO:0005886">
    <property type="term" value="C:plasma membrane"/>
    <property type="evidence" value="ECO:0007669"/>
    <property type="project" value="UniProtKB-SubCell"/>
</dbReference>
<dbReference type="GO" id="GO:0050136">
    <property type="term" value="F:NADH:ubiquinone reductase (non-electrogenic) activity"/>
    <property type="evidence" value="ECO:0007669"/>
    <property type="project" value="UniProtKB-UniRule"/>
</dbReference>
<dbReference type="GO" id="GO:0048038">
    <property type="term" value="F:quinone binding"/>
    <property type="evidence" value="ECO:0007669"/>
    <property type="project" value="UniProtKB-KW"/>
</dbReference>
<dbReference type="GO" id="GO:0042773">
    <property type="term" value="P:ATP synthesis coupled electron transport"/>
    <property type="evidence" value="ECO:0007669"/>
    <property type="project" value="InterPro"/>
</dbReference>
<dbReference type="FunFam" id="1.10.287.3510:FF:000001">
    <property type="entry name" value="NADH-quinone oxidoreductase subunit K"/>
    <property type="match status" value="1"/>
</dbReference>
<dbReference type="Gene3D" id="1.10.287.3510">
    <property type="match status" value="1"/>
</dbReference>
<dbReference type="HAMAP" id="MF_01456">
    <property type="entry name" value="NDH1_NuoK"/>
    <property type="match status" value="1"/>
</dbReference>
<dbReference type="InterPro" id="IPR001133">
    <property type="entry name" value="NADH_UbQ_OxRdtase_chain4L/K"/>
</dbReference>
<dbReference type="InterPro" id="IPR039428">
    <property type="entry name" value="NUOK/Mnh_C1-like"/>
</dbReference>
<dbReference type="NCBIfam" id="NF004320">
    <property type="entry name" value="PRK05715.1-2"/>
    <property type="match status" value="1"/>
</dbReference>
<dbReference type="NCBIfam" id="NF004321">
    <property type="entry name" value="PRK05715.1-3"/>
    <property type="match status" value="1"/>
</dbReference>
<dbReference type="NCBIfam" id="NF004323">
    <property type="entry name" value="PRK05715.1-5"/>
    <property type="match status" value="1"/>
</dbReference>
<dbReference type="PANTHER" id="PTHR11434:SF21">
    <property type="entry name" value="NADH DEHYDROGENASE SUBUNIT 4L-RELATED"/>
    <property type="match status" value="1"/>
</dbReference>
<dbReference type="PANTHER" id="PTHR11434">
    <property type="entry name" value="NADH-UBIQUINONE OXIDOREDUCTASE SUBUNIT ND4L"/>
    <property type="match status" value="1"/>
</dbReference>
<dbReference type="Pfam" id="PF00420">
    <property type="entry name" value="Oxidored_q2"/>
    <property type="match status" value="1"/>
</dbReference>
<sequence length="110" mass="12423">MLKILNMNEYISLNHYLILSSLVFTIGMFGLFMNRKNIINILMSIELMLLAVNINFVAFSVYMQELSGQIFSIIILTVAAAETAIGLAILLIYFRNKGSIKITDINKMRG</sequence>
<accession>Q9ZCG2</accession>
<keyword id="KW-0997">Cell inner membrane</keyword>
<keyword id="KW-1003">Cell membrane</keyword>
<keyword id="KW-0472">Membrane</keyword>
<keyword id="KW-0520">NAD</keyword>
<keyword id="KW-0874">Quinone</keyword>
<keyword id="KW-1185">Reference proteome</keyword>
<keyword id="KW-1278">Translocase</keyword>
<keyword id="KW-0812">Transmembrane</keyword>
<keyword id="KW-1133">Transmembrane helix</keyword>
<keyword id="KW-0813">Transport</keyword>
<comment type="function">
    <text evidence="1">NDH-1 shuttles electrons from NADH, via FMN and iron-sulfur (Fe-S) centers, to quinones in the respiratory chain. The immediate electron acceptor for the enzyme in this species is believed to be ubiquinone. Couples the redox reaction to proton translocation (for every two electrons transferred, four hydrogen ions are translocated across the cytoplasmic membrane), and thus conserves the redox energy in a proton gradient.</text>
</comment>
<comment type="catalytic activity">
    <reaction evidence="1">
        <text>a quinone + NADH + 5 H(+)(in) = a quinol + NAD(+) + 4 H(+)(out)</text>
        <dbReference type="Rhea" id="RHEA:57888"/>
        <dbReference type="ChEBI" id="CHEBI:15378"/>
        <dbReference type="ChEBI" id="CHEBI:24646"/>
        <dbReference type="ChEBI" id="CHEBI:57540"/>
        <dbReference type="ChEBI" id="CHEBI:57945"/>
        <dbReference type="ChEBI" id="CHEBI:132124"/>
    </reaction>
</comment>
<comment type="subunit">
    <text evidence="1">NDH-1 is composed of 14 different subunits. Subunits NuoA, H, J, K, L, M, N constitute the membrane sector of the complex.</text>
</comment>
<comment type="subcellular location">
    <subcellularLocation>
        <location evidence="1">Cell inner membrane</location>
        <topology evidence="1">Multi-pass membrane protein</topology>
    </subcellularLocation>
</comment>
<comment type="similarity">
    <text evidence="1">Belongs to the complex I subunit 4L family.</text>
</comment>
<gene>
    <name evidence="1" type="primary">nuoK</name>
    <name type="ordered locus">RP791</name>
</gene>
<reference key="1">
    <citation type="journal article" date="1998" name="Nature">
        <title>The genome sequence of Rickettsia prowazekii and the origin of mitochondria.</title>
        <authorList>
            <person name="Andersson S.G.E."/>
            <person name="Zomorodipour A."/>
            <person name="Andersson J.O."/>
            <person name="Sicheritz-Ponten T."/>
            <person name="Alsmark U.C.M."/>
            <person name="Podowski R.M."/>
            <person name="Naeslund A.K."/>
            <person name="Eriksson A.-S."/>
            <person name="Winkler H.H."/>
            <person name="Kurland C.G."/>
        </authorList>
    </citation>
    <scope>NUCLEOTIDE SEQUENCE [LARGE SCALE GENOMIC DNA]</scope>
    <source>
        <strain>Madrid E</strain>
    </source>
</reference>